<evidence type="ECO:0000255" key="1">
    <source>
        <dbReference type="HAMAP-Rule" id="MF_00129"/>
    </source>
</evidence>
<protein>
    <recommendedName>
        <fullName evidence="1">tRNA uridine 5-carboxymethylaminomethyl modification enzyme MnmG</fullName>
    </recommendedName>
    <alternativeName>
        <fullName evidence="1">Glucose-inhibited division protein A</fullName>
    </alternativeName>
</protein>
<gene>
    <name evidence="1" type="primary">mnmG</name>
    <name evidence="1" type="synonym">gidA</name>
    <name type="ordered locus">swp_5167</name>
</gene>
<organism>
    <name type="scientific">Shewanella piezotolerans (strain WP3 / JCM 13877)</name>
    <dbReference type="NCBI Taxonomy" id="225849"/>
    <lineage>
        <taxon>Bacteria</taxon>
        <taxon>Pseudomonadati</taxon>
        <taxon>Pseudomonadota</taxon>
        <taxon>Gammaproteobacteria</taxon>
        <taxon>Alteromonadales</taxon>
        <taxon>Shewanellaceae</taxon>
        <taxon>Shewanella</taxon>
    </lineage>
</organism>
<reference key="1">
    <citation type="journal article" date="2008" name="PLoS ONE">
        <title>Environmental adaptation: genomic analysis of the piezotolerant and psychrotolerant deep-sea iron reducing bacterium Shewanella piezotolerans WP3.</title>
        <authorList>
            <person name="Wang F."/>
            <person name="Wang J."/>
            <person name="Jian H."/>
            <person name="Zhang B."/>
            <person name="Li S."/>
            <person name="Wang F."/>
            <person name="Zeng X."/>
            <person name="Gao L."/>
            <person name="Bartlett D.H."/>
            <person name="Yu J."/>
            <person name="Hu S."/>
            <person name="Xiao X."/>
        </authorList>
    </citation>
    <scope>NUCLEOTIDE SEQUENCE [LARGE SCALE GENOMIC DNA]</scope>
    <source>
        <strain>WP3 / JCM 13877</strain>
    </source>
</reference>
<comment type="function">
    <text evidence="1">NAD-binding protein involved in the addition of a carboxymethylaminomethyl (cmnm) group at the wobble position (U34) of certain tRNAs, forming tRNA-cmnm(5)s(2)U34.</text>
</comment>
<comment type="cofactor">
    <cofactor evidence="1">
        <name>FAD</name>
        <dbReference type="ChEBI" id="CHEBI:57692"/>
    </cofactor>
</comment>
<comment type="subunit">
    <text evidence="1">Homodimer. Heterotetramer of two MnmE and two MnmG subunits.</text>
</comment>
<comment type="subcellular location">
    <subcellularLocation>
        <location evidence="1">Cytoplasm</location>
    </subcellularLocation>
</comment>
<comment type="similarity">
    <text evidence="1">Belongs to the MnmG family.</text>
</comment>
<sequence length="629" mass="69652">MHFHERFDVIVVGGGHAGTEAALASARMGSKTLLLTHNIDTLGQMSCNPAIGGIGKGHLVKEIDALGGAMAIATDYAGIQFRTLNSSKGPAVRATRAQADRALYRHKIQEILQHQPNLRIFQQAVDDLVVENETVVGVVTQMGLAFEAPAVVLTTGTFLSGKIHIGLENYSGGRAGDPPAIALAHRLQELPIRVGRLKTGTPPRIDANTIDFSKMTEQKGDDPLPVMSFIGDVNQHPEQVSCHITHTNERTHDIIRAGLDRSPMYSGVIEGIGPRYCPSIEDKINRFADKNSHQIFIEPEGLNTTEIYPNGISTSLPFDVQLNLVRSIKGMENAEIMRPGYAIEYDYFDPRDLKNSLETKTINGLFFAGQINGTTGYEEAGAQGLLAGMNASLQIQGKETWCPRRDQAYLGVLVDDLSTLGTKEPYRMFTSRAEYRLLLREDNADLRLTEKGRELGLVDDERWAKFSDKMESIETELQRLRSQWIHPRSPLVDVLNPHLKTPIAREATFEDLLRRPELDYPTLMSIDGFGPGIDDQRAAEQVQIQVKYSGYIQRQQDEIDKAIRHETTGLPLDLDYQEVPGLSNEVIAKMNEHKPETVGQASRISGMTPAAISILLVHLKKRGLLRKSA</sequence>
<keyword id="KW-0963">Cytoplasm</keyword>
<keyword id="KW-0274">FAD</keyword>
<keyword id="KW-0285">Flavoprotein</keyword>
<keyword id="KW-0520">NAD</keyword>
<keyword id="KW-0819">tRNA processing</keyword>
<name>MNMG_SHEPW</name>
<accession>B8CVV6</accession>
<dbReference type="EMBL" id="CP000472">
    <property type="protein sequence ID" value="ACJ31782.1"/>
    <property type="molecule type" value="Genomic_DNA"/>
</dbReference>
<dbReference type="RefSeq" id="WP_020915105.1">
    <property type="nucleotide sequence ID" value="NC_011566.1"/>
</dbReference>
<dbReference type="SMR" id="B8CVV6"/>
<dbReference type="STRING" id="225849.swp_5167"/>
<dbReference type="KEGG" id="swp:swp_5167"/>
<dbReference type="eggNOG" id="COG0445">
    <property type="taxonomic scope" value="Bacteria"/>
</dbReference>
<dbReference type="HOGENOM" id="CLU_007831_2_2_6"/>
<dbReference type="OrthoDB" id="9815560at2"/>
<dbReference type="Proteomes" id="UP000000753">
    <property type="component" value="Chromosome"/>
</dbReference>
<dbReference type="GO" id="GO:0005829">
    <property type="term" value="C:cytosol"/>
    <property type="evidence" value="ECO:0007669"/>
    <property type="project" value="TreeGrafter"/>
</dbReference>
<dbReference type="GO" id="GO:0050660">
    <property type="term" value="F:flavin adenine dinucleotide binding"/>
    <property type="evidence" value="ECO:0007669"/>
    <property type="project" value="UniProtKB-UniRule"/>
</dbReference>
<dbReference type="GO" id="GO:0030488">
    <property type="term" value="P:tRNA methylation"/>
    <property type="evidence" value="ECO:0007669"/>
    <property type="project" value="TreeGrafter"/>
</dbReference>
<dbReference type="GO" id="GO:0002098">
    <property type="term" value="P:tRNA wobble uridine modification"/>
    <property type="evidence" value="ECO:0007669"/>
    <property type="project" value="InterPro"/>
</dbReference>
<dbReference type="FunFam" id="1.10.10.1800:FF:000001">
    <property type="entry name" value="tRNA uridine 5-carboxymethylaminomethyl modification enzyme MnmG"/>
    <property type="match status" value="1"/>
</dbReference>
<dbReference type="FunFam" id="1.10.150.570:FF:000001">
    <property type="entry name" value="tRNA uridine 5-carboxymethylaminomethyl modification enzyme MnmG"/>
    <property type="match status" value="1"/>
</dbReference>
<dbReference type="FunFam" id="3.50.50.60:FF:000002">
    <property type="entry name" value="tRNA uridine 5-carboxymethylaminomethyl modification enzyme MnmG"/>
    <property type="match status" value="1"/>
</dbReference>
<dbReference type="FunFam" id="3.50.50.60:FF:000010">
    <property type="entry name" value="tRNA uridine 5-carboxymethylaminomethyl modification enzyme MnmG"/>
    <property type="match status" value="1"/>
</dbReference>
<dbReference type="Gene3D" id="3.50.50.60">
    <property type="entry name" value="FAD/NAD(P)-binding domain"/>
    <property type="match status" value="2"/>
</dbReference>
<dbReference type="Gene3D" id="1.10.150.570">
    <property type="entry name" value="GidA associated domain, C-terminal subdomain"/>
    <property type="match status" value="1"/>
</dbReference>
<dbReference type="Gene3D" id="1.10.10.1800">
    <property type="entry name" value="tRNA uridine 5-carboxymethylaminomethyl modification enzyme MnmG/GidA"/>
    <property type="match status" value="1"/>
</dbReference>
<dbReference type="HAMAP" id="MF_00129">
    <property type="entry name" value="MnmG_GidA"/>
    <property type="match status" value="1"/>
</dbReference>
<dbReference type="InterPro" id="IPR036188">
    <property type="entry name" value="FAD/NAD-bd_sf"/>
</dbReference>
<dbReference type="InterPro" id="IPR049312">
    <property type="entry name" value="GIDA_C_N"/>
</dbReference>
<dbReference type="InterPro" id="IPR004416">
    <property type="entry name" value="MnmG"/>
</dbReference>
<dbReference type="InterPro" id="IPR002218">
    <property type="entry name" value="MnmG-rel"/>
</dbReference>
<dbReference type="InterPro" id="IPR020595">
    <property type="entry name" value="MnmG-rel_CS"/>
</dbReference>
<dbReference type="InterPro" id="IPR026904">
    <property type="entry name" value="MnmG_C"/>
</dbReference>
<dbReference type="InterPro" id="IPR047001">
    <property type="entry name" value="MnmG_C_subdom"/>
</dbReference>
<dbReference type="InterPro" id="IPR044920">
    <property type="entry name" value="MnmG_C_subdom_sf"/>
</dbReference>
<dbReference type="InterPro" id="IPR040131">
    <property type="entry name" value="MnmG_N"/>
</dbReference>
<dbReference type="NCBIfam" id="TIGR00136">
    <property type="entry name" value="mnmG_gidA"/>
    <property type="match status" value="1"/>
</dbReference>
<dbReference type="PANTHER" id="PTHR11806">
    <property type="entry name" value="GLUCOSE INHIBITED DIVISION PROTEIN A"/>
    <property type="match status" value="1"/>
</dbReference>
<dbReference type="PANTHER" id="PTHR11806:SF0">
    <property type="entry name" value="PROTEIN MTO1 HOMOLOG, MITOCHONDRIAL"/>
    <property type="match status" value="1"/>
</dbReference>
<dbReference type="Pfam" id="PF01134">
    <property type="entry name" value="GIDA"/>
    <property type="match status" value="1"/>
</dbReference>
<dbReference type="Pfam" id="PF21680">
    <property type="entry name" value="GIDA_C_1st"/>
    <property type="match status" value="1"/>
</dbReference>
<dbReference type="Pfam" id="PF13932">
    <property type="entry name" value="SAM_GIDA_C"/>
    <property type="match status" value="1"/>
</dbReference>
<dbReference type="SMART" id="SM01228">
    <property type="entry name" value="GIDA_assoc_3"/>
    <property type="match status" value="1"/>
</dbReference>
<dbReference type="SUPFAM" id="SSF51905">
    <property type="entry name" value="FAD/NAD(P)-binding domain"/>
    <property type="match status" value="1"/>
</dbReference>
<dbReference type="PROSITE" id="PS01280">
    <property type="entry name" value="GIDA_1"/>
    <property type="match status" value="1"/>
</dbReference>
<dbReference type="PROSITE" id="PS01281">
    <property type="entry name" value="GIDA_2"/>
    <property type="match status" value="1"/>
</dbReference>
<proteinExistence type="inferred from homology"/>
<feature type="chain" id="PRO_1000117721" description="tRNA uridine 5-carboxymethylaminomethyl modification enzyme MnmG">
    <location>
        <begin position="1"/>
        <end position="629"/>
    </location>
</feature>
<feature type="binding site" evidence="1">
    <location>
        <begin position="13"/>
        <end position="18"/>
    </location>
    <ligand>
        <name>FAD</name>
        <dbReference type="ChEBI" id="CHEBI:57692"/>
    </ligand>
</feature>
<feature type="binding site" evidence="1">
    <location>
        <begin position="273"/>
        <end position="287"/>
    </location>
    <ligand>
        <name>NAD(+)</name>
        <dbReference type="ChEBI" id="CHEBI:57540"/>
    </ligand>
</feature>